<reference key="1">
    <citation type="submission" date="1999-06" db="EMBL/GenBank/DDBJ databases">
        <title>Germanium induced gene in lettuce using suppression subtractive hybridization method.</title>
        <authorList>
            <person name="Lee G.P."/>
            <person name="Park K.W."/>
            <person name="Lee C.H."/>
            <person name="Kim C.S."/>
        </authorList>
    </citation>
    <scope>NUCLEOTIDE SEQUENCE [MRNA]</scope>
    <source>
        <strain>cv. Chungchima</strain>
    </source>
</reference>
<feature type="chain" id="PRO_0000138635" description="Peptide methionine sulfoxide reductase">
    <location>
        <begin position="1"/>
        <end position="259"/>
    </location>
</feature>
<feature type="region of interest" description="Disordered" evidence="1">
    <location>
        <begin position="66"/>
        <end position="90"/>
    </location>
</feature>
<dbReference type="EC" id="1.8.4.11"/>
<dbReference type="EMBL" id="AF162204">
    <property type="protein sequence ID" value="AAF19789.1"/>
    <property type="molecule type" value="mRNA"/>
</dbReference>
<dbReference type="GO" id="GO:0033744">
    <property type="term" value="F:L-methionine:thioredoxin-disulfide S-oxidoreductase activity"/>
    <property type="evidence" value="ECO:0007669"/>
    <property type="project" value="RHEA"/>
</dbReference>
<dbReference type="GO" id="GO:0008113">
    <property type="term" value="F:peptide-methionine (S)-S-oxide reductase activity"/>
    <property type="evidence" value="ECO:0007669"/>
    <property type="project" value="UniProtKB-EC"/>
</dbReference>
<dbReference type="FunFam" id="3.30.1060.10:FF:000002">
    <property type="entry name" value="Peptide methionine sulfoxide reductase"/>
    <property type="match status" value="1"/>
</dbReference>
<dbReference type="Gene3D" id="3.30.1060.10">
    <property type="entry name" value="Peptide methionine sulphoxide reductase MsrA"/>
    <property type="match status" value="1"/>
</dbReference>
<dbReference type="HAMAP" id="MF_01401">
    <property type="entry name" value="MsrA"/>
    <property type="match status" value="1"/>
</dbReference>
<dbReference type="InterPro" id="IPR002569">
    <property type="entry name" value="Met_Sox_Rdtase_MsrA_dom"/>
</dbReference>
<dbReference type="InterPro" id="IPR036509">
    <property type="entry name" value="Met_Sox_Rdtase_MsrA_sf"/>
</dbReference>
<dbReference type="InterPro" id="IPR050162">
    <property type="entry name" value="MsrA_MetSO_reductase"/>
</dbReference>
<dbReference type="NCBIfam" id="TIGR00401">
    <property type="entry name" value="msrA"/>
    <property type="match status" value="1"/>
</dbReference>
<dbReference type="PANTHER" id="PTHR42799">
    <property type="entry name" value="MITOCHONDRIAL PEPTIDE METHIONINE SULFOXIDE REDUCTASE"/>
    <property type="match status" value="1"/>
</dbReference>
<dbReference type="PANTHER" id="PTHR42799:SF2">
    <property type="entry name" value="MITOCHONDRIAL PEPTIDE METHIONINE SULFOXIDE REDUCTASE"/>
    <property type="match status" value="1"/>
</dbReference>
<dbReference type="Pfam" id="PF01625">
    <property type="entry name" value="PMSR"/>
    <property type="match status" value="1"/>
</dbReference>
<dbReference type="SUPFAM" id="SSF55068">
    <property type="entry name" value="Peptide methionine sulfoxide reductase"/>
    <property type="match status" value="1"/>
</dbReference>
<organism>
    <name type="scientific">Lactuca sativa</name>
    <name type="common">Garden lettuce</name>
    <dbReference type="NCBI Taxonomy" id="4236"/>
    <lineage>
        <taxon>Eukaryota</taxon>
        <taxon>Viridiplantae</taxon>
        <taxon>Streptophyta</taxon>
        <taxon>Embryophyta</taxon>
        <taxon>Tracheophyta</taxon>
        <taxon>Spermatophyta</taxon>
        <taxon>Magnoliopsida</taxon>
        <taxon>eudicotyledons</taxon>
        <taxon>Gunneridae</taxon>
        <taxon>Pentapetalae</taxon>
        <taxon>asterids</taxon>
        <taxon>campanulids</taxon>
        <taxon>Asterales</taxon>
        <taxon>Asteraceae</taxon>
        <taxon>Cichorioideae</taxon>
        <taxon>Cichorieae</taxon>
        <taxon>Lactucinae</taxon>
        <taxon>Lactuca</taxon>
    </lineage>
</organism>
<name>MSRA_LACSA</name>
<keyword id="KW-0560">Oxidoreductase</keyword>
<evidence type="ECO:0000256" key="1">
    <source>
        <dbReference type="SAM" id="MobiDB-lite"/>
    </source>
</evidence>
<evidence type="ECO:0000305" key="2"/>
<sequence length="259" mass="28841">MFLLRTTTATTTPASLPLPLLSISSHLSLSKPSSFPVTSTKPLFTLRHSSSTPKIMSWLGRLGXGTRTPADASMDQSSIAQGPDDDIPAPGQQFAQFGAGCFWGVELAFQRVPGVSKTEVGYTQGFLHNPTYNDICSGTTNHSEVVRVQYDPKACSFDSLLDCFWERHDPTTLNRQGNDVGTQYRSGIYFYTPEQEKAAIEAKERHQKKLNRTVVTEILPAKKFYRAEEYHQQYLAKGGRFGFRQSTEKGCNDPIRCYG</sequence>
<protein>
    <recommendedName>
        <fullName>Peptide methionine sulfoxide reductase</fullName>
        <ecNumber>1.8.4.11</ecNumber>
    </recommendedName>
    <alternativeName>
        <fullName>Peptide-methionine (S)-S-oxide reductase</fullName>
        <shortName>Peptide Met(O) reductase</shortName>
    </alternativeName>
    <alternativeName>
        <fullName>Protein-methionine-S-oxide reductase</fullName>
    </alternativeName>
</protein>
<accession>Q9SEC2</accession>
<comment type="function">
    <text>Has an important function as a repair enzyme for proteins that have been inactivated by oxidation. Catalyzes the reversible oxidation-reduction of methionine sulfoxide in proteins to methionine.</text>
</comment>
<comment type="catalytic activity">
    <reaction>
        <text>L-methionyl-[protein] + [thioredoxin]-disulfide + H2O = L-methionyl-(S)-S-oxide-[protein] + [thioredoxin]-dithiol</text>
        <dbReference type="Rhea" id="RHEA:14217"/>
        <dbReference type="Rhea" id="RHEA-COMP:10698"/>
        <dbReference type="Rhea" id="RHEA-COMP:10700"/>
        <dbReference type="Rhea" id="RHEA-COMP:12313"/>
        <dbReference type="Rhea" id="RHEA-COMP:12315"/>
        <dbReference type="ChEBI" id="CHEBI:15377"/>
        <dbReference type="ChEBI" id="CHEBI:16044"/>
        <dbReference type="ChEBI" id="CHEBI:29950"/>
        <dbReference type="ChEBI" id="CHEBI:44120"/>
        <dbReference type="ChEBI" id="CHEBI:50058"/>
        <dbReference type="EC" id="1.8.4.11"/>
    </reaction>
</comment>
<comment type="catalytic activity">
    <reaction>
        <text>[thioredoxin]-disulfide + L-methionine + H2O = L-methionine (S)-S-oxide + [thioredoxin]-dithiol</text>
        <dbReference type="Rhea" id="RHEA:19993"/>
        <dbReference type="Rhea" id="RHEA-COMP:10698"/>
        <dbReference type="Rhea" id="RHEA-COMP:10700"/>
        <dbReference type="ChEBI" id="CHEBI:15377"/>
        <dbReference type="ChEBI" id="CHEBI:29950"/>
        <dbReference type="ChEBI" id="CHEBI:50058"/>
        <dbReference type="ChEBI" id="CHEBI:57844"/>
        <dbReference type="ChEBI" id="CHEBI:58772"/>
        <dbReference type="EC" id="1.8.4.11"/>
    </reaction>
</comment>
<comment type="similarity">
    <text evidence="2">Belongs to the MsrA Met sulfoxide reductase family.</text>
</comment>
<proteinExistence type="evidence at transcript level"/>